<sequence>MREIISIHIGQAGAQVGNACWELYCLEHGINPDGQMPSDKSVGGGDDAFNTFFSETSSGKHVPRAIYLDLEPTVIDEIRTGTYRQLFHPEQLITGKEDAANNYARGHYTVGKEIVDLCLDRVRKLADQCSGLQGFLVFHSVGGGTGSGFGSLLLERLSVDYGKKSKLDFCVYPSPQVSTAVVEPYNSVLSTHGLLEHTDVAFMLDNEAIYDLCKKSLDIDRPSYANLNRLVAQVISSLTTSLRFDGALNVDINEFQTNLVPYPRIHFMLASYAPVISAEKAFHEQLSVAELTNTVFEPSSMMAKCDPRHGKYMACCLMYRGDVVPKDVTAAVAVIKTKRTIQFVDWCPTGFKCGINYQAPSVVPGGDLAKVQRALCMISNTTAIAEVFSRIDHKFDLMYAKRAFVHWYVGEGMEEGEFSEAREDLAALEKDYEEVGAETVGDDEAEEEM</sequence>
<proteinExistence type="evidence at transcript level"/>
<name>TBAN_PHYPO</name>
<reference key="1">
    <citation type="journal article" date="1987" name="J. Mol. Biol.">
        <title>Primary structure of an alpha-tubulin gene of Physarum polycephalum.</title>
        <authorList>
            <person name="Monteiro M.J."/>
            <person name="Cox R.A."/>
        </authorList>
    </citation>
    <scope>NUCLEOTIDE SEQUENCE [GENOMIC DNA]</scope>
</reference>
<reference key="2">
    <citation type="journal article" date="1985" name="J. Mol. Biol.">
        <title>A plasmodial alpha-tubulin cDNA from Physarum polycephalum. Nucleotide sequence and comparative analysis.</title>
        <authorList>
            <person name="Krammer G."/>
            <person name="Singhofer-Wowra M."/>
            <person name="Seedorf K."/>
            <person name="Little M."/>
            <person name="Schedl T."/>
        </authorList>
    </citation>
    <scope>NUCLEOTIDE SEQUENCE [MRNA] OF 1-423</scope>
</reference>
<dbReference type="EC" id="3.6.5.-" evidence="2"/>
<dbReference type="EMBL" id="X05039">
    <property type="protein sequence ID" value="CAA28712.1"/>
    <property type="molecule type" value="Genomic_DNA"/>
</dbReference>
<dbReference type="EMBL" id="X05467">
    <property type="protein sequence ID" value="CAA28712.1"/>
    <property type="status" value="JOINED"/>
    <property type="molecule type" value="Genomic_DNA"/>
</dbReference>
<dbReference type="EMBL" id="X05468">
    <property type="protein sequence ID" value="CAA28712.1"/>
    <property type="status" value="JOINED"/>
    <property type="molecule type" value="Genomic_DNA"/>
</dbReference>
<dbReference type="EMBL" id="X05469">
    <property type="protein sequence ID" value="CAA28712.1"/>
    <property type="status" value="JOINED"/>
    <property type="molecule type" value="Genomic_DNA"/>
</dbReference>
<dbReference type="EMBL" id="X02625">
    <property type="protein sequence ID" value="CAA26477.1"/>
    <property type="molecule type" value="mRNA"/>
</dbReference>
<dbReference type="PIR" id="A02971">
    <property type="entry name" value="UBFYA"/>
</dbReference>
<dbReference type="PIR" id="S02130">
    <property type="entry name" value="S02130"/>
</dbReference>
<dbReference type="SMR" id="P04105"/>
<dbReference type="GO" id="GO:0005737">
    <property type="term" value="C:cytoplasm"/>
    <property type="evidence" value="ECO:0007669"/>
    <property type="project" value="UniProtKB-KW"/>
</dbReference>
<dbReference type="GO" id="GO:0005874">
    <property type="term" value="C:microtubule"/>
    <property type="evidence" value="ECO:0007669"/>
    <property type="project" value="UniProtKB-KW"/>
</dbReference>
<dbReference type="GO" id="GO:0005634">
    <property type="term" value="C:nucleus"/>
    <property type="evidence" value="ECO:0007669"/>
    <property type="project" value="UniProtKB-SubCell"/>
</dbReference>
<dbReference type="GO" id="GO:0005819">
    <property type="term" value="C:spindle"/>
    <property type="evidence" value="ECO:0007669"/>
    <property type="project" value="UniProtKB-SubCell"/>
</dbReference>
<dbReference type="GO" id="GO:0005525">
    <property type="term" value="F:GTP binding"/>
    <property type="evidence" value="ECO:0007669"/>
    <property type="project" value="UniProtKB-KW"/>
</dbReference>
<dbReference type="GO" id="GO:0016787">
    <property type="term" value="F:hydrolase activity"/>
    <property type="evidence" value="ECO:0007669"/>
    <property type="project" value="UniProtKB-KW"/>
</dbReference>
<dbReference type="GO" id="GO:0046872">
    <property type="term" value="F:metal ion binding"/>
    <property type="evidence" value="ECO:0007669"/>
    <property type="project" value="UniProtKB-KW"/>
</dbReference>
<dbReference type="GO" id="GO:0005200">
    <property type="term" value="F:structural constituent of cytoskeleton"/>
    <property type="evidence" value="ECO:0007669"/>
    <property type="project" value="InterPro"/>
</dbReference>
<dbReference type="GO" id="GO:0007017">
    <property type="term" value="P:microtubule-based process"/>
    <property type="evidence" value="ECO:0007669"/>
    <property type="project" value="InterPro"/>
</dbReference>
<dbReference type="CDD" id="cd02186">
    <property type="entry name" value="alpha_tubulin"/>
    <property type="match status" value="1"/>
</dbReference>
<dbReference type="FunFam" id="1.10.287.600:FF:000005">
    <property type="entry name" value="Tubulin alpha chain"/>
    <property type="match status" value="1"/>
</dbReference>
<dbReference type="FunFam" id="3.30.1330.20:FF:000001">
    <property type="entry name" value="Tubulin alpha chain"/>
    <property type="match status" value="1"/>
</dbReference>
<dbReference type="FunFam" id="3.40.50.1440:FF:000004">
    <property type="entry name" value="Tubulin alpha chain"/>
    <property type="match status" value="1"/>
</dbReference>
<dbReference type="Gene3D" id="1.10.287.600">
    <property type="entry name" value="Helix hairpin bin"/>
    <property type="match status" value="1"/>
</dbReference>
<dbReference type="Gene3D" id="3.30.1330.20">
    <property type="entry name" value="Tubulin/FtsZ, C-terminal domain"/>
    <property type="match status" value="1"/>
</dbReference>
<dbReference type="Gene3D" id="3.40.50.1440">
    <property type="entry name" value="Tubulin/FtsZ, GTPase domain"/>
    <property type="match status" value="1"/>
</dbReference>
<dbReference type="InterPro" id="IPR002452">
    <property type="entry name" value="Alpha_tubulin"/>
</dbReference>
<dbReference type="InterPro" id="IPR013838">
    <property type="entry name" value="Beta-tubulin_BS"/>
</dbReference>
<dbReference type="InterPro" id="IPR008280">
    <property type="entry name" value="Tub_FtsZ_C"/>
</dbReference>
<dbReference type="InterPro" id="IPR000217">
    <property type="entry name" value="Tubulin"/>
</dbReference>
<dbReference type="InterPro" id="IPR037103">
    <property type="entry name" value="Tubulin/FtsZ-like_C"/>
</dbReference>
<dbReference type="InterPro" id="IPR018316">
    <property type="entry name" value="Tubulin/FtsZ_2-layer-sand-dom"/>
</dbReference>
<dbReference type="InterPro" id="IPR036525">
    <property type="entry name" value="Tubulin/FtsZ_GTPase_sf"/>
</dbReference>
<dbReference type="InterPro" id="IPR023123">
    <property type="entry name" value="Tubulin_C"/>
</dbReference>
<dbReference type="InterPro" id="IPR017975">
    <property type="entry name" value="Tubulin_CS"/>
</dbReference>
<dbReference type="InterPro" id="IPR003008">
    <property type="entry name" value="Tubulin_FtsZ_GTPase"/>
</dbReference>
<dbReference type="PANTHER" id="PTHR11588">
    <property type="entry name" value="TUBULIN"/>
    <property type="match status" value="1"/>
</dbReference>
<dbReference type="Pfam" id="PF00091">
    <property type="entry name" value="Tubulin"/>
    <property type="match status" value="1"/>
</dbReference>
<dbReference type="Pfam" id="PF03953">
    <property type="entry name" value="Tubulin_C"/>
    <property type="match status" value="1"/>
</dbReference>
<dbReference type="PRINTS" id="PR01162">
    <property type="entry name" value="ALPHATUBULIN"/>
</dbReference>
<dbReference type="PRINTS" id="PR01161">
    <property type="entry name" value="TUBULIN"/>
</dbReference>
<dbReference type="SMART" id="SM00864">
    <property type="entry name" value="Tubulin"/>
    <property type="match status" value="1"/>
</dbReference>
<dbReference type="SMART" id="SM00865">
    <property type="entry name" value="Tubulin_C"/>
    <property type="match status" value="1"/>
</dbReference>
<dbReference type="SUPFAM" id="SSF55307">
    <property type="entry name" value="Tubulin C-terminal domain-like"/>
    <property type="match status" value="1"/>
</dbReference>
<dbReference type="SUPFAM" id="SSF52490">
    <property type="entry name" value="Tubulin nucleotide-binding domain-like"/>
    <property type="match status" value="1"/>
</dbReference>
<dbReference type="PROSITE" id="PS00227">
    <property type="entry name" value="TUBULIN"/>
    <property type="match status" value="1"/>
</dbReference>
<evidence type="ECO:0000250" key="1"/>
<evidence type="ECO:0000250" key="2">
    <source>
        <dbReference type="UniProtKB" id="P68363"/>
    </source>
</evidence>
<evidence type="ECO:0000305" key="3"/>
<gene>
    <name type="primary">ALTBN</name>
    <name type="synonym">ALTB1</name>
</gene>
<protein>
    <recommendedName>
        <fullName>Tubulin alpha-1B chain</fullName>
        <ecNumber evidence="2">3.6.5.-</ecNumber>
    </recommendedName>
    <alternativeName>
        <fullName>Tubulin alpha-N chain</fullName>
    </alternativeName>
</protein>
<comment type="function">
    <text>Tubulin is the major constituent of microtubules, a cylinder consisting of laterally associated linear protofilaments composed of alpha- and beta-tubulin heterodimers. Microtubules grow by the addition of GTP-tubulin dimers to the microtubule end, where a stabilizing cap forms. Below the cap, tubulin dimers are in GDP-bound state, owing to GTPase activity of alpha-tubulin.</text>
</comment>
<comment type="catalytic activity">
    <reaction evidence="2">
        <text>GTP + H2O = GDP + phosphate + H(+)</text>
        <dbReference type="Rhea" id="RHEA:19669"/>
        <dbReference type="ChEBI" id="CHEBI:15377"/>
        <dbReference type="ChEBI" id="CHEBI:15378"/>
        <dbReference type="ChEBI" id="CHEBI:37565"/>
        <dbReference type="ChEBI" id="CHEBI:43474"/>
        <dbReference type="ChEBI" id="CHEBI:58189"/>
    </reaction>
    <physiologicalReaction direction="left-to-right" evidence="2">
        <dbReference type="Rhea" id="RHEA:19670"/>
    </physiologicalReaction>
</comment>
<comment type="cofactor">
    <cofactor evidence="2">
        <name>Mg(2+)</name>
        <dbReference type="ChEBI" id="CHEBI:18420"/>
    </cofactor>
</comment>
<comment type="subunit">
    <text>Dimer of alpha and beta chains. A typical microtubule is a hollow water-filled tube with an outer diameter of 25 nm and an inner diameter of 15 nM. Alpha-beta heterodimers associate head-to-tail to form protofilaments running lengthwise along the microtubule wall with the beta-tubulin subunit facing the microtubule plus end conferring a structural polarity. Microtubules usually have 13 protofilaments but different protofilament numbers can be found in some organisms and specialized cells.</text>
</comment>
<comment type="subcellular location">
    <subcellularLocation>
        <location>Cytoplasm</location>
        <location>Cytoskeleton</location>
        <location>Spindle</location>
    </subcellularLocation>
    <subcellularLocation>
        <location>Nucleus</location>
    </subcellularLocation>
    <text>Mitosis in the slime mold Plasmodium differs from the process in many eukaryotes. The tubulin chains must be transported to the nuclei for intranuclear assembly of the spindle.</text>
</comment>
<comment type="developmental stage">
    <text>Plasmodium specific alpha 1-tubulin.</text>
</comment>
<comment type="PTM">
    <text evidence="1">Acetylation of alpha chains at Lys-40 stabilizes microtubules and affects affinity and processivity of microtubule motors. This modification has a role in multiple cellular functions, ranging from cell motility, cell cycle progression or cell differentiation to intracellular trafficking and signaling (By similarity).</text>
</comment>
<comment type="miscellaneous">
    <text>The source of this protein was the multinucleated Plasmodium of the slime mold. At least two alpha tubulin genes are expressed in the plasmodium.</text>
</comment>
<comment type="similarity">
    <text evidence="3">Belongs to the tubulin family.</text>
</comment>
<accession>P04105</accession>
<feature type="chain" id="PRO_0000048215" description="Tubulin alpha-1B chain">
    <location>
        <begin position="1"/>
        <end position="449"/>
    </location>
</feature>
<feature type="active site" evidence="2">
    <location>
        <position position="254"/>
    </location>
</feature>
<feature type="binding site" evidence="2">
    <location>
        <position position="11"/>
    </location>
    <ligand>
        <name>GTP</name>
        <dbReference type="ChEBI" id="CHEBI:37565"/>
    </ligand>
</feature>
<feature type="binding site" evidence="2">
    <location>
        <position position="71"/>
    </location>
    <ligand>
        <name>GTP</name>
        <dbReference type="ChEBI" id="CHEBI:37565"/>
    </ligand>
</feature>
<feature type="binding site" evidence="2">
    <location>
        <position position="71"/>
    </location>
    <ligand>
        <name>Mg(2+)</name>
        <dbReference type="ChEBI" id="CHEBI:18420"/>
    </ligand>
</feature>
<feature type="binding site" evidence="2">
    <location>
        <position position="140"/>
    </location>
    <ligand>
        <name>GTP</name>
        <dbReference type="ChEBI" id="CHEBI:37565"/>
    </ligand>
</feature>
<feature type="binding site" evidence="2">
    <location>
        <position position="144"/>
    </location>
    <ligand>
        <name>GTP</name>
        <dbReference type="ChEBI" id="CHEBI:37565"/>
    </ligand>
</feature>
<feature type="binding site" evidence="2">
    <location>
        <position position="145"/>
    </location>
    <ligand>
        <name>GTP</name>
        <dbReference type="ChEBI" id="CHEBI:37565"/>
    </ligand>
</feature>
<feature type="binding site" evidence="2">
    <location>
        <position position="179"/>
    </location>
    <ligand>
        <name>GTP</name>
        <dbReference type="ChEBI" id="CHEBI:37565"/>
    </ligand>
</feature>
<feature type="binding site" evidence="2">
    <location>
        <position position="206"/>
    </location>
    <ligand>
        <name>GTP</name>
        <dbReference type="ChEBI" id="CHEBI:37565"/>
    </ligand>
</feature>
<feature type="binding site" evidence="2">
    <location>
        <position position="228"/>
    </location>
    <ligand>
        <name>GTP</name>
        <dbReference type="ChEBI" id="CHEBI:37565"/>
    </ligand>
</feature>
<feature type="modified residue" description="N6-acetyllysine" evidence="1">
    <location>
        <position position="40"/>
    </location>
</feature>
<feature type="sequence conflict" description="In Ref. 2; CAA26477." evidence="3" ref="2">
    <original>V</original>
    <variation>M</variation>
    <location>
        <position position="188"/>
    </location>
</feature>
<feature type="sequence conflict" description="In Ref. 1." evidence="3" ref="1">
    <original>A</original>
    <variation>V</variation>
    <location>
        <position position="400"/>
    </location>
</feature>
<feature type="sequence conflict" description="In Ref. 2; CAA26477." evidence="3" ref="2">
    <original>E</original>
    <variation>D</variation>
    <location>
        <position position="423"/>
    </location>
</feature>
<organism>
    <name type="scientific">Physarum polycephalum</name>
    <name type="common">Slime mold</name>
    <dbReference type="NCBI Taxonomy" id="5791"/>
    <lineage>
        <taxon>Eukaryota</taxon>
        <taxon>Amoebozoa</taxon>
        <taxon>Evosea</taxon>
        <taxon>Eumycetozoa</taxon>
        <taxon>Myxogastria</taxon>
        <taxon>Myxogastromycetidae</taxon>
        <taxon>Physariida</taxon>
        <taxon>Physaraceae</taxon>
        <taxon>Physarum</taxon>
    </lineage>
</organism>
<keyword id="KW-0007">Acetylation</keyword>
<keyword id="KW-0963">Cytoplasm</keyword>
<keyword id="KW-0206">Cytoskeleton</keyword>
<keyword id="KW-0342">GTP-binding</keyword>
<keyword id="KW-0378">Hydrolase</keyword>
<keyword id="KW-0460">Magnesium</keyword>
<keyword id="KW-0479">Metal-binding</keyword>
<keyword id="KW-0493">Microtubule</keyword>
<keyword id="KW-0547">Nucleotide-binding</keyword>
<keyword id="KW-0539">Nucleus</keyword>